<keyword id="KW-0021">Allosteric enzyme</keyword>
<keyword id="KW-0067">ATP-binding</keyword>
<keyword id="KW-0963">Cytoplasm</keyword>
<keyword id="KW-0324">Glycolysis</keyword>
<keyword id="KW-0418">Kinase</keyword>
<keyword id="KW-0460">Magnesium</keyword>
<keyword id="KW-0479">Metal-binding</keyword>
<keyword id="KW-0547">Nucleotide-binding</keyword>
<keyword id="KW-0808">Transferase</keyword>
<feature type="chain" id="PRO_1000120022" description="ATP-dependent 6-phosphofructokinase">
    <location>
        <begin position="1"/>
        <end position="324"/>
    </location>
</feature>
<feature type="active site" description="Proton acceptor" evidence="1">
    <location>
        <position position="132"/>
    </location>
</feature>
<feature type="binding site" evidence="1">
    <location>
        <position position="15"/>
    </location>
    <ligand>
        <name>ATP</name>
        <dbReference type="ChEBI" id="CHEBI:30616"/>
    </ligand>
</feature>
<feature type="binding site" evidence="1">
    <location>
        <begin position="25"/>
        <end position="29"/>
    </location>
    <ligand>
        <name>ADP</name>
        <dbReference type="ChEBI" id="CHEBI:456216"/>
        <note>allosteric activator; ligand shared between dimeric partners</note>
    </ligand>
</feature>
<feature type="binding site" evidence="1">
    <location>
        <begin position="76"/>
        <end position="77"/>
    </location>
    <ligand>
        <name>ATP</name>
        <dbReference type="ChEBI" id="CHEBI:30616"/>
    </ligand>
</feature>
<feature type="binding site" evidence="1">
    <location>
        <begin position="106"/>
        <end position="109"/>
    </location>
    <ligand>
        <name>ATP</name>
        <dbReference type="ChEBI" id="CHEBI:30616"/>
    </ligand>
</feature>
<feature type="binding site" evidence="1">
    <location>
        <position position="107"/>
    </location>
    <ligand>
        <name>Mg(2+)</name>
        <dbReference type="ChEBI" id="CHEBI:18420"/>
        <note>catalytic</note>
    </ligand>
</feature>
<feature type="binding site" description="in other chain" evidence="1">
    <location>
        <begin position="130"/>
        <end position="132"/>
    </location>
    <ligand>
        <name>substrate</name>
        <note>ligand shared between dimeric partners</note>
    </ligand>
</feature>
<feature type="binding site" description="in other chain" evidence="1">
    <location>
        <position position="159"/>
    </location>
    <ligand>
        <name>ADP</name>
        <dbReference type="ChEBI" id="CHEBI:456216"/>
        <note>allosteric activator; ligand shared between dimeric partners</note>
    </ligand>
</feature>
<feature type="binding site" evidence="1">
    <location>
        <position position="167"/>
    </location>
    <ligand>
        <name>substrate</name>
        <note>ligand shared between dimeric partners</note>
    </ligand>
</feature>
<feature type="binding site" description="in other chain" evidence="1">
    <location>
        <begin position="174"/>
        <end position="176"/>
    </location>
    <ligand>
        <name>substrate</name>
        <note>ligand shared between dimeric partners</note>
    </ligand>
</feature>
<feature type="binding site" description="in other chain" evidence="1">
    <location>
        <begin position="190"/>
        <end position="192"/>
    </location>
    <ligand>
        <name>ADP</name>
        <dbReference type="ChEBI" id="CHEBI:456216"/>
        <note>allosteric activator; ligand shared between dimeric partners</note>
    </ligand>
</feature>
<feature type="binding site" description="in other chain" evidence="1">
    <location>
        <position position="216"/>
    </location>
    <ligand>
        <name>ADP</name>
        <dbReference type="ChEBI" id="CHEBI:456216"/>
        <note>allosteric activator; ligand shared between dimeric partners</note>
    </ligand>
</feature>
<feature type="binding site" description="in other chain" evidence="1">
    <location>
        <begin position="218"/>
        <end position="220"/>
    </location>
    <ligand>
        <name>ADP</name>
        <dbReference type="ChEBI" id="CHEBI:456216"/>
        <note>allosteric activator; ligand shared between dimeric partners</note>
    </ligand>
</feature>
<feature type="binding site" description="in other chain" evidence="1">
    <location>
        <position position="227"/>
    </location>
    <ligand>
        <name>substrate</name>
        <note>ligand shared between dimeric partners</note>
    </ligand>
</feature>
<feature type="binding site" evidence="1">
    <location>
        <position position="248"/>
    </location>
    <ligand>
        <name>substrate</name>
        <note>ligand shared between dimeric partners</note>
    </ligand>
</feature>
<feature type="binding site" description="in other chain" evidence="1">
    <location>
        <begin position="254"/>
        <end position="257"/>
    </location>
    <ligand>
        <name>substrate</name>
        <note>ligand shared between dimeric partners</note>
    </ligand>
</feature>
<reference key="1">
    <citation type="submission" date="2008-06" db="EMBL/GenBank/DDBJ databases">
        <title>Genome and proteome analysis of A. pleuropneumoniae serotype 7.</title>
        <authorList>
            <person name="Linke B."/>
            <person name="Buettner F."/>
            <person name="Martinez-Arias R."/>
            <person name="Goesmann A."/>
            <person name="Baltes N."/>
            <person name="Tegetmeyer H."/>
            <person name="Singh M."/>
            <person name="Gerlach G.F."/>
        </authorList>
    </citation>
    <scope>NUCLEOTIDE SEQUENCE [LARGE SCALE GENOMIC DNA]</scope>
    <source>
        <strain>AP76</strain>
    </source>
</reference>
<sequence>MAKQIKKIAVLTSGGDAPGMNAAIRGVVRAALNEGLEVYGVQDGYYGLYTDRVIPLDRRSVSETINRGGTFLGSARFPQFKDPDVRKKSVETLKKYDIDALVVIGGDGSYMGAKLITEEFGYPCIGIPGTIDNDIVGTDYTIGYQTALETAVEAIDRLRDTSTSHQRISIVEIMGRHCGDLTISAALASGCEYIIVPEKGLDKESLMRNIEDGFNKGKRHAIIAITELMTDVQALAKEIEDRFGHETRATVLGHIQRGGAPCPFDRILASRMGVYAVDLLLQGHGGRCIGIKNENLVHHDIIDAINNMRRPFKEELFEAARKLF</sequence>
<protein>
    <recommendedName>
        <fullName evidence="1">ATP-dependent 6-phosphofructokinase</fullName>
        <shortName evidence="1">ATP-PFK</shortName>
        <shortName evidence="1">Phosphofructokinase</shortName>
        <ecNumber evidence="1">2.7.1.11</ecNumber>
    </recommendedName>
    <alternativeName>
        <fullName evidence="1">Phosphohexokinase</fullName>
    </alternativeName>
</protein>
<proteinExistence type="inferred from homology"/>
<dbReference type="EC" id="2.7.1.11" evidence="1"/>
<dbReference type="EMBL" id="CP001091">
    <property type="protein sequence ID" value="ACE61834.1"/>
    <property type="molecule type" value="Genomic_DNA"/>
</dbReference>
<dbReference type="RefSeq" id="WP_005598005.1">
    <property type="nucleotide sequence ID" value="NC_010939.1"/>
</dbReference>
<dbReference type="SMR" id="B3GY11"/>
<dbReference type="GeneID" id="48599356"/>
<dbReference type="KEGG" id="apa:APP7_1182"/>
<dbReference type="HOGENOM" id="CLU_020655_0_1_6"/>
<dbReference type="UniPathway" id="UPA00109">
    <property type="reaction ID" value="UER00182"/>
</dbReference>
<dbReference type="Proteomes" id="UP000001226">
    <property type="component" value="Chromosome"/>
</dbReference>
<dbReference type="GO" id="GO:0005945">
    <property type="term" value="C:6-phosphofructokinase complex"/>
    <property type="evidence" value="ECO:0007669"/>
    <property type="project" value="TreeGrafter"/>
</dbReference>
<dbReference type="GO" id="GO:0003872">
    <property type="term" value="F:6-phosphofructokinase activity"/>
    <property type="evidence" value="ECO:0007669"/>
    <property type="project" value="UniProtKB-UniRule"/>
</dbReference>
<dbReference type="GO" id="GO:0016208">
    <property type="term" value="F:AMP binding"/>
    <property type="evidence" value="ECO:0007669"/>
    <property type="project" value="TreeGrafter"/>
</dbReference>
<dbReference type="GO" id="GO:0005524">
    <property type="term" value="F:ATP binding"/>
    <property type="evidence" value="ECO:0007669"/>
    <property type="project" value="UniProtKB-KW"/>
</dbReference>
<dbReference type="GO" id="GO:0070095">
    <property type="term" value="F:fructose-6-phosphate binding"/>
    <property type="evidence" value="ECO:0007669"/>
    <property type="project" value="TreeGrafter"/>
</dbReference>
<dbReference type="GO" id="GO:0042802">
    <property type="term" value="F:identical protein binding"/>
    <property type="evidence" value="ECO:0007669"/>
    <property type="project" value="TreeGrafter"/>
</dbReference>
<dbReference type="GO" id="GO:0046872">
    <property type="term" value="F:metal ion binding"/>
    <property type="evidence" value="ECO:0007669"/>
    <property type="project" value="UniProtKB-KW"/>
</dbReference>
<dbReference type="GO" id="GO:0048029">
    <property type="term" value="F:monosaccharide binding"/>
    <property type="evidence" value="ECO:0007669"/>
    <property type="project" value="TreeGrafter"/>
</dbReference>
<dbReference type="GO" id="GO:0061621">
    <property type="term" value="P:canonical glycolysis"/>
    <property type="evidence" value="ECO:0007669"/>
    <property type="project" value="TreeGrafter"/>
</dbReference>
<dbReference type="GO" id="GO:0030388">
    <property type="term" value="P:fructose 1,6-bisphosphate metabolic process"/>
    <property type="evidence" value="ECO:0007669"/>
    <property type="project" value="TreeGrafter"/>
</dbReference>
<dbReference type="GO" id="GO:0006002">
    <property type="term" value="P:fructose 6-phosphate metabolic process"/>
    <property type="evidence" value="ECO:0007669"/>
    <property type="project" value="InterPro"/>
</dbReference>
<dbReference type="CDD" id="cd00763">
    <property type="entry name" value="Bacterial_PFK"/>
    <property type="match status" value="1"/>
</dbReference>
<dbReference type="FunFam" id="3.40.50.450:FF:000001">
    <property type="entry name" value="ATP-dependent 6-phosphofructokinase"/>
    <property type="match status" value="1"/>
</dbReference>
<dbReference type="FunFam" id="3.40.50.460:FF:000002">
    <property type="entry name" value="ATP-dependent 6-phosphofructokinase"/>
    <property type="match status" value="1"/>
</dbReference>
<dbReference type="Gene3D" id="3.40.50.450">
    <property type="match status" value="1"/>
</dbReference>
<dbReference type="Gene3D" id="3.40.50.460">
    <property type="entry name" value="Phosphofructokinase domain"/>
    <property type="match status" value="1"/>
</dbReference>
<dbReference type="HAMAP" id="MF_00339">
    <property type="entry name" value="Phosphofructokinase_I_B1"/>
    <property type="match status" value="1"/>
</dbReference>
<dbReference type="InterPro" id="IPR022953">
    <property type="entry name" value="ATP_PFK"/>
</dbReference>
<dbReference type="InterPro" id="IPR012003">
    <property type="entry name" value="ATP_PFK_prok-type"/>
</dbReference>
<dbReference type="InterPro" id="IPR012828">
    <property type="entry name" value="PFKA_ATP_prok"/>
</dbReference>
<dbReference type="InterPro" id="IPR015912">
    <property type="entry name" value="Phosphofructokinase_CS"/>
</dbReference>
<dbReference type="InterPro" id="IPR000023">
    <property type="entry name" value="Phosphofructokinase_dom"/>
</dbReference>
<dbReference type="InterPro" id="IPR035966">
    <property type="entry name" value="PKF_sf"/>
</dbReference>
<dbReference type="NCBIfam" id="TIGR02482">
    <property type="entry name" value="PFKA_ATP"/>
    <property type="match status" value="1"/>
</dbReference>
<dbReference type="NCBIfam" id="NF002872">
    <property type="entry name" value="PRK03202.1"/>
    <property type="match status" value="1"/>
</dbReference>
<dbReference type="PANTHER" id="PTHR13697:SF4">
    <property type="entry name" value="ATP-DEPENDENT 6-PHOSPHOFRUCTOKINASE"/>
    <property type="match status" value="1"/>
</dbReference>
<dbReference type="PANTHER" id="PTHR13697">
    <property type="entry name" value="PHOSPHOFRUCTOKINASE"/>
    <property type="match status" value="1"/>
</dbReference>
<dbReference type="Pfam" id="PF00365">
    <property type="entry name" value="PFK"/>
    <property type="match status" value="1"/>
</dbReference>
<dbReference type="PIRSF" id="PIRSF000532">
    <property type="entry name" value="ATP_PFK_prok"/>
    <property type="match status" value="1"/>
</dbReference>
<dbReference type="PRINTS" id="PR00476">
    <property type="entry name" value="PHFRCTKINASE"/>
</dbReference>
<dbReference type="SUPFAM" id="SSF53784">
    <property type="entry name" value="Phosphofructokinase"/>
    <property type="match status" value="1"/>
</dbReference>
<dbReference type="PROSITE" id="PS00433">
    <property type="entry name" value="PHOSPHOFRUCTOKINASE"/>
    <property type="match status" value="1"/>
</dbReference>
<comment type="function">
    <text evidence="1">Catalyzes the phosphorylation of D-fructose 6-phosphate to fructose 1,6-bisphosphate by ATP, the first committing step of glycolysis.</text>
</comment>
<comment type="catalytic activity">
    <reaction evidence="1">
        <text>beta-D-fructose 6-phosphate + ATP = beta-D-fructose 1,6-bisphosphate + ADP + H(+)</text>
        <dbReference type="Rhea" id="RHEA:16109"/>
        <dbReference type="ChEBI" id="CHEBI:15378"/>
        <dbReference type="ChEBI" id="CHEBI:30616"/>
        <dbReference type="ChEBI" id="CHEBI:32966"/>
        <dbReference type="ChEBI" id="CHEBI:57634"/>
        <dbReference type="ChEBI" id="CHEBI:456216"/>
        <dbReference type="EC" id="2.7.1.11"/>
    </reaction>
</comment>
<comment type="cofactor">
    <cofactor evidence="1">
        <name>Mg(2+)</name>
        <dbReference type="ChEBI" id="CHEBI:18420"/>
    </cofactor>
</comment>
<comment type="activity regulation">
    <text evidence="1">Allosterically activated by ADP and other diphosphonucleosides, and allosterically inhibited by phosphoenolpyruvate.</text>
</comment>
<comment type="pathway">
    <text evidence="1">Carbohydrate degradation; glycolysis; D-glyceraldehyde 3-phosphate and glycerone phosphate from D-glucose: step 3/4.</text>
</comment>
<comment type="subunit">
    <text evidence="1">Homotetramer.</text>
</comment>
<comment type="subcellular location">
    <subcellularLocation>
        <location evidence="1">Cytoplasm</location>
    </subcellularLocation>
</comment>
<comment type="similarity">
    <text evidence="1">Belongs to the phosphofructokinase type A (PFKA) family. ATP-dependent PFK group I subfamily. Prokaryotic clade 'B1' sub-subfamily.</text>
</comment>
<name>PFKA_ACTP7</name>
<accession>B3GY11</accession>
<gene>
    <name evidence="1" type="primary">pfkA</name>
    <name type="ordered locus">APP7_1182</name>
</gene>
<organism>
    <name type="scientific">Actinobacillus pleuropneumoniae serotype 7 (strain AP76)</name>
    <dbReference type="NCBI Taxonomy" id="537457"/>
    <lineage>
        <taxon>Bacteria</taxon>
        <taxon>Pseudomonadati</taxon>
        <taxon>Pseudomonadota</taxon>
        <taxon>Gammaproteobacteria</taxon>
        <taxon>Pasteurellales</taxon>
        <taxon>Pasteurellaceae</taxon>
        <taxon>Actinobacillus</taxon>
    </lineage>
</organism>
<evidence type="ECO:0000255" key="1">
    <source>
        <dbReference type="HAMAP-Rule" id="MF_00339"/>
    </source>
</evidence>